<proteinExistence type="inferred from homology"/>
<name>UPP_STAES</name>
<accession>Q8CRN4</accession>
<feature type="chain" id="PRO_0000120885" description="Uracil phosphoribosyltransferase">
    <location>
        <begin position="1"/>
        <end position="209"/>
    </location>
</feature>
<feature type="binding site" evidence="1">
    <location>
        <position position="79"/>
    </location>
    <ligand>
        <name>5-phospho-alpha-D-ribose 1-diphosphate</name>
        <dbReference type="ChEBI" id="CHEBI:58017"/>
    </ligand>
</feature>
<feature type="binding site" evidence="1">
    <location>
        <position position="104"/>
    </location>
    <ligand>
        <name>5-phospho-alpha-D-ribose 1-diphosphate</name>
        <dbReference type="ChEBI" id="CHEBI:58017"/>
    </ligand>
</feature>
<feature type="binding site" evidence="1">
    <location>
        <begin position="131"/>
        <end position="139"/>
    </location>
    <ligand>
        <name>5-phospho-alpha-D-ribose 1-diphosphate</name>
        <dbReference type="ChEBI" id="CHEBI:58017"/>
    </ligand>
</feature>
<feature type="binding site" evidence="1">
    <location>
        <position position="194"/>
    </location>
    <ligand>
        <name>uracil</name>
        <dbReference type="ChEBI" id="CHEBI:17568"/>
    </ligand>
</feature>
<feature type="binding site" evidence="1">
    <location>
        <begin position="199"/>
        <end position="201"/>
    </location>
    <ligand>
        <name>uracil</name>
        <dbReference type="ChEBI" id="CHEBI:17568"/>
    </ligand>
</feature>
<feature type="binding site" evidence="1">
    <location>
        <position position="200"/>
    </location>
    <ligand>
        <name>5-phospho-alpha-D-ribose 1-diphosphate</name>
        <dbReference type="ChEBI" id="CHEBI:58017"/>
    </ligand>
</feature>
<gene>
    <name evidence="1" type="primary">upp</name>
    <name type="ordered locus">SE_1709</name>
</gene>
<reference key="1">
    <citation type="journal article" date="2003" name="Mol. Microbiol.">
        <title>Genome-based analysis of virulence genes in a non-biofilm-forming Staphylococcus epidermidis strain (ATCC 12228).</title>
        <authorList>
            <person name="Zhang Y.-Q."/>
            <person name="Ren S.-X."/>
            <person name="Li H.-L."/>
            <person name="Wang Y.-X."/>
            <person name="Fu G."/>
            <person name="Yang J."/>
            <person name="Qin Z.-Q."/>
            <person name="Miao Y.-G."/>
            <person name="Wang W.-Y."/>
            <person name="Chen R.-S."/>
            <person name="Shen Y."/>
            <person name="Chen Z."/>
            <person name="Yuan Z.-H."/>
            <person name="Zhao G.-P."/>
            <person name="Qu D."/>
            <person name="Danchin A."/>
            <person name="Wen Y.-M."/>
        </authorList>
    </citation>
    <scope>NUCLEOTIDE SEQUENCE [LARGE SCALE GENOMIC DNA]</scope>
    <source>
        <strain>ATCC 12228 / FDA PCI 1200</strain>
    </source>
</reference>
<organism>
    <name type="scientific">Staphylococcus epidermidis (strain ATCC 12228 / FDA PCI 1200)</name>
    <dbReference type="NCBI Taxonomy" id="176280"/>
    <lineage>
        <taxon>Bacteria</taxon>
        <taxon>Bacillati</taxon>
        <taxon>Bacillota</taxon>
        <taxon>Bacilli</taxon>
        <taxon>Bacillales</taxon>
        <taxon>Staphylococcaceae</taxon>
        <taxon>Staphylococcus</taxon>
    </lineage>
</organism>
<keyword id="KW-0021">Allosteric enzyme</keyword>
<keyword id="KW-0328">Glycosyltransferase</keyword>
<keyword id="KW-0342">GTP-binding</keyword>
<keyword id="KW-0460">Magnesium</keyword>
<keyword id="KW-0547">Nucleotide-binding</keyword>
<keyword id="KW-0808">Transferase</keyword>
<protein>
    <recommendedName>
        <fullName evidence="1">Uracil phosphoribosyltransferase</fullName>
        <ecNumber evidence="1">2.4.2.9</ecNumber>
    </recommendedName>
    <alternativeName>
        <fullName evidence="1">UMP pyrophosphorylase</fullName>
    </alternativeName>
    <alternativeName>
        <fullName evidence="1">UPRTase</fullName>
    </alternativeName>
</protein>
<comment type="function">
    <text evidence="1">Catalyzes the conversion of uracil and 5-phospho-alpha-D-ribose 1-diphosphate (PRPP) to UMP and diphosphate.</text>
</comment>
<comment type="catalytic activity">
    <reaction evidence="1">
        <text>UMP + diphosphate = 5-phospho-alpha-D-ribose 1-diphosphate + uracil</text>
        <dbReference type="Rhea" id="RHEA:13017"/>
        <dbReference type="ChEBI" id="CHEBI:17568"/>
        <dbReference type="ChEBI" id="CHEBI:33019"/>
        <dbReference type="ChEBI" id="CHEBI:57865"/>
        <dbReference type="ChEBI" id="CHEBI:58017"/>
        <dbReference type="EC" id="2.4.2.9"/>
    </reaction>
</comment>
<comment type="cofactor">
    <cofactor evidence="1">
        <name>Mg(2+)</name>
        <dbReference type="ChEBI" id="CHEBI:18420"/>
    </cofactor>
    <text evidence="1">Binds 1 Mg(2+) ion per subunit. The magnesium is bound as Mg-PRPP.</text>
</comment>
<comment type="activity regulation">
    <text evidence="1">Allosterically activated by GTP.</text>
</comment>
<comment type="pathway">
    <text evidence="1">Pyrimidine metabolism; UMP biosynthesis via salvage pathway; UMP from uracil: step 1/1.</text>
</comment>
<comment type="similarity">
    <text evidence="1">Belongs to the UPRTase family.</text>
</comment>
<evidence type="ECO:0000255" key="1">
    <source>
        <dbReference type="HAMAP-Rule" id="MF_01218"/>
    </source>
</evidence>
<dbReference type="EC" id="2.4.2.9" evidence="1"/>
<dbReference type="EMBL" id="AE015929">
    <property type="protein sequence ID" value="AAO05308.1"/>
    <property type="molecule type" value="Genomic_DNA"/>
</dbReference>
<dbReference type="RefSeq" id="NP_765264.1">
    <property type="nucleotide sequence ID" value="NC_004461.1"/>
</dbReference>
<dbReference type="RefSeq" id="WP_001829916.1">
    <property type="nucleotide sequence ID" value="NZ_WBME01000021.1"/>
</dbReference>
<dbReference type="SMR" id="Q8CRN4"/>
<dbReference type="GeneID" id="50018190"/>
<dbReference type="KEGG" id="sep:SE_1709"/>
<dbReference type="PATRIC" id="fig|176280.10.peg.1670"/>
<dbReference type="eggNOG" id="COG0035">
    <property type="taxonomic scope" value="Bacteria"/>
</dbReference>
<dbReference type="HOGENOM" id="CLU_067096_2_2_9"/>
<dbReference type="OrthoDB" id="9781675at2"/>
<dbReference type="UniPathway" id="UPA00574">
    <property type="reaction ID" value="UER00636"/>
</dbReference>
<dbReference type="Proteomes" id="UP000001411">
    <property type="component" value="Chromosome"/>
</dbReference>
<dbReference type="GO" id="GO:0005525">
    <property type="term" value="F:GTP binding"/>
    <property type="evidence" value="ECO:0007669"/>
    <property type="project" value="UniProtKB-KW"/>
</dbReference>
<dbReference type="GO" id="GO:0000287">
    <property type="term" value="F:magnesium ion binding"/>
    <property type="evidence" value="ECO:0007669"/>
    <property type="project" value="UniProtKB-UniRule"/>
</dbReference>
<dbReference type="GO" id="GO:0004845">
    <property type="term" value="F:uracil phosphoribosyltransferase activity"/>
    <property type="evidence" value="ECO:0007669"/>
    <property type="project" value="UniProtKB-UniRule"/>
</dbReference>
<dbReference type="GO" id="GO:0044206">
    <property type="term" value="P:UMP salvage"/>
    <property type="evidence" value="ECO:0007669"/>
    <property type="project" value="UniProtKB-UniRule"/>
</dbReference>
<dbReference type="GO" id="GO:0006223">
    <property type="term" value="P:uracil salvage"/>
    <property type="evidence" value="ECO:0007669"/>
    <property type="project" value="InterPro"/>
</dbReference>
<dbReference type="CDD" id="cd06223">
    <property type="entry name" value="PRTases_typeI"/>
    <property type="match status" value="1"/>
</dbReference>
<dbReference type="FunFam" id="3.40.50.2020:FF:000003">
    <property type="entry name" value="Uracil phosphoribosyltransferase"/>
    <property type="match status" value="1"/>
</dbReference>
<dbReference type="Gene3D" id="3.40.50.2020">
    <property type="match status" value="1"/>
</dbReference>
<dbReference type="HAMAP" id="MF_01218_B">
    <property type="entry name" value="Upp_B"/>
    <property type="match status" value="1"/>
</dbReference>
<dbReference type="InterPro" id="IPR000836">
    <property type="entry name" value="PRibTrfase_dom"/>
</dbReference>
<dbReference type="InterPro" id="IPR029057">
    <property type="entry name" value="PRTase-like"/>
</dbReference>
<dbReference type="InterPro" id="IPR034332">
    <property type="entry name" value="Upp_B"/>
</dbReference>
<dbReference type="InterPro" id="IPR050054">
    <property type="entry name" value="UPRTase/APRTase"/>
</dbReference>
<dbReference type="InterPro" id="IPR005765">
    <property type="entry name" value="Ura_phspho_trans"/>
</dbReference>
<dbReference type="NCBIfam" id="NF001097">
    <property type="entry name" value="PRK00129.1"/>
    <property type="match status" value="1"/>
</dbReference>
<dbReference type="NCBIfam" id="TIGR01091">
    <property type="entry name" value="upp"/>
    <property type="match status" value="1"/>
</dbReference>
<dbReference type="PANTHER" id="PTHR32315">
    <property type="entry name" value="ADENINE PHOSPHORIBOSYLTRANSFERASE"/>
    <property type="match status" value="1"/>
</dbReference>
<dbReference type="PANTHER" id="PTHR32315:SF4">
    <property type="entry name" value="URACIL PHOSPHORIBOSYLTRANSFERASE, CHLOROPLASTIC"/>
    <property type="match status" value="1"/>
</dbReference>
<dbReference type="Pfam" id="PF14681">
    <property type="entry name" value="UPRTase"/>
    <property type="match status" value="1"/>
</dbReference>
<dbReference type="SUPFAM" id="SSF53271">
    <property type="entry name" value="PRTase-like"/>
    <property type="match status" value="1"/>
</dbReference>
<sequence>MSKVHVFDHPLIQHKLSYIRDARTGTKEFRELVDEVGMLMAYEVTRDLELQDVEIQTPVTKMTAKRLAGKKLAIVPILRAGLGMTDGVLSLVPAARVGHIGLYRDPETLEAVEYFAKMPQDIDERQIIVVDPMLATGASAIEAISSLKKRGAKSIRFMCLIAAPEGVEKMQEAHPDVDIYIAALDEKLNDKAYITPGLGDAGDRLFGTK</sequence>